<dbReference type="EMBL" id="AE005174">
    <property type="protein sequence ID" value="AAG58865.1"/>
    <property type="molecule type" value="Genomic_DNA"/>
</dbReference>
<dbReference type="EMBL" id="BA000007">
    <property type="protein sequence ID" value="BAB38026.1"/>
    <property type="molecule type" value="Genomic_DNA"/>
</dbReference>
<dbReference type="PIR" id="C91204">
    <property type="entry name" value="C91204"/>
</dbReference>
<dbReference type="RefSeq" id="NP_312630.1">
    <property type="nucleotide sequence ID" value="NC_002695.1"/>
</dbReference>
<dbReference type="RefSeq" id="WP_000879194.1">
    <property type="nucleotide sequence ID" value="NZ_VOAI01000011.1"/>
</dbReference>
<dbReference type="SMR" id="P0AGC1"/>
<dbReference type="STRING" id="155864.Z5156"/>
<dbReference type="GeneID" id="915432"/>
<dbReference type="GeneID" id="93778407"/>
<dbReference type="KEGG" id="ece:Z5156"/>
<dbReference type="KEGG" id="ecs:ECs_4603"/>
<dbReference type="PATRIC" id="fig|386585.9.peg.4811"/>
<dbReference type="eggNOG" id="COG2271">
    <property type="taxonomic scope" value="Bacteria"/>
</dbReference>
<dbReference type="HOGENOM" id="CLU_001265_31_0_6"/>
<dbReference type="OMA" id="GTLMWGY"/>
<dbReference type="Proteomes" id="UP000000558">
    <property type="component" value="Chromosome"/>
</dbReference>
<dbReference type="Proteomes" id="UP000002519">
    <property type="component" value="Chromosome"/>
</dbReference>
<dbReference type="GO" id="GO:0005886">
    <property type="term" value="C:plasma membrane"/>
    <property type="evidence" value="ECO:0007669"/>
    <property type="project" value="UniProtKB-SubCell"/>
</dbReference>
<dbReference type="GO" id="GO:0061513">
    <property type="term" value="F:glucose 6-phosphate:phosphate antiporter activity"/>
    <property type="evidence" value="ECO:0007669"/>
    <property type="project" value="TreeGrafter"/>
</dbReference>
<dbReference type="GO" id="GO:0035435">
    <property type="term" value="P:phosphate ion transmembrane transport"/>
    <property type="evidence" value="ECO:0007669"/>
    <property type="project" value="TreeGrafter"/>
</dbReference>
<dbReference type="CDD" id="cd17345">
    <property type="entry name" value="MFS_GlpT"/>
    <property type="match status" value="1"/>
</dbReference>
<dbReference type="FunFam" id="1.20.1250.20:FF:000031">
    <property type="entry name" value="Hexose phosphate transporter"/>
    <property type="match status" value="1"/>
</dbReference>
<dbReference type="FunFam" id="1.20.1250.20:FF:000033">
    <property type="entry name" value="Hexose phosphate transporter"/>
    <property type="match status" value="1"/>
</dbReference>
<dbReference type="Gene3D" id="1.20.1250.20">
    <property type="entry name" value="MFS general substrate transporter like domains"/>
    <property type="match status" value="2"/>
</dbReference>
<dbReference type="InterPro" id="IPR011701">
    <property type="entry name" value="MFS"/>
</dbReference>
<dbReference type="InterPro" id="IPR020846">
    <property type="entry name" value="MFS_dom"/>
</dbReference>
<dbReference type="InterPro" id="IPR036259">
    <property type="entry name" value="MFS_trans_sf"/>
</dbReference>
<dbReference type="InterPro" id="IPR051337">
    <property type="entry name" value="OPA_Antiporter"/>
</dbReference>
<dbReference type="InterPro" id="IPR021159">
    <property type="entry name" value="Sugar-P_transporter_CS"/>
</dbReference>
<dbReference type="InterPro" id="IPR000849">
    <property type="entry name" value="Sugar_P_transporter"/>
</dbReference>
<dbReference type="NCBIfam" id="TIGR00881">
    <property type="entry name" value="2A0104"/>
    <property type="match status" value="1"/>
</dbReference>
<dbReference type="NCBIfam" id="NF007107">
    <property type="entry name" value="PRK09556.1"/>
    <property type="match status" value="1"/>
</dbReference>
<dbReference type="PANTHER" id="PTHR43826">
    <property type="entry name" value="GLUCOSE-6-PHOSPHATE EXCHANGER SLC37A4"/>
    <property type="match status" value="1"/>
</dbReference>
<dbReference type="PANTHER" id="PTHR43826:SF2">
    <property type="entry name" value="HEXOSE-6-PHOSPHATE:PHOSPHATE ANTIPORTER"/>
    <property type="match status" value="1"/>
</dbReference>
<dbReference type="Pfam" id="PF07690">
    <property type="entry name" value="MFS_1"/>
    <property type="match status" value="1"/>
</dbReference>
<dbReference type="PIRSF" id="PIRSF002808">
    <property type="entry name" value="Hexose_phosphate_transp"/>
    <property type="match status" value="1"/>
</dbReference>
<dbReference type="SUPFAM" id="SSF103473">
    <property type="entry name" value="MFS general substrate transporter"/>
    <property type="match status" value="1"/>
</dbReference>
<dbReference type="PROSITE" id="PS00942">
    <property type="entry name" value="GLPT"/>
    <property type="match status" value="1"/>
</dbReference>
<dbReference type="PROSITE" id="PS50850">
    <property type="entry name" value="MFS"/>
    <property type="match status" value="1"/>
</dbReference>
<accession>P0AGC1</accession>
<accession>P13408</accession>
<accession>P76727</accession>
<evidence type="ECO:0000250" key="1">
    <source>
        <dbReference type="UniProtKB" id="P0AGC0"/>
    </source>
</evidence>
<evidence type="ECO:0000255" key="2"/>
<evidence type="ECO:0000305" key="3"/>
<organism>
    <name type="scientific">Escherichia coli O157:H7</name>
    <dbReference type="NCBI Taxonomy" id="83334"/>
    <lineage>
        <taxon>Bacteria</taxon>
        <taxon>Pseudomonadati</taxon>
        <taxon>Pseudomonadota</taxon>
        <taxon>Gammaproteobacteria</taxon>
        <taxon>Enterobacterales</taxon>
        <taxon>Enterobacteriaceae</taxon>
        <taxon>Escherichia</taxon>
    </lineage>
</organism>
<comment type="function">
    <text evidence="1">Mediates the exchange of external hexose 6-phosphate and internal inorganic phosphate.</text>
</comment>
<comment type="subcellular location">
    <subcellularLocation>
        <location evidence="1">Cell inner membrane</location>
        <topology evidence="2">Multi-pass membrane protein</topology>
    </subcellularLocation>
</comment>
<comment type="similarity">
    <text evidence="3">Belongs to the major facilitator superfamily. Organophosphate:Pi antiporter (OPA) (TC 2.A.1.4) family.</text>
</comment>
<protein>
    <recommendedName>
        <fullName evidence="1">Hexose-6-phosphate:phosphate antiporter</fullName>
    </recommendedName>
</protein>
<proteinExistence type="inferred from homology"/>
<reference key="1">
    <citation type="journal article" date="2001" name="Nature">
        <title>Genome sequence of enterohaemorrhagic Escherichia coli O157:H7.</title>
        <authorList>
            <person name="Perna N.T."/>
            <person name="Plunkett G. III"/>
            <person name="Burland V."/>
            <person name="Mau B."/>
            <person name="Glasner J.D."/>
            <person name="Rose D.J."/>
            <person name="Mayhew G.F."/>
            <person name="Evans P.S."/>
            <person name="Gregor J."/>
            <person name="Kirkpatrick H.A."/>
            <person name="Posfai G."/>
            <person name="Hackett J."/>
            <person name="Klink S."/>
            <person name="Boutin A."/>
            <person name="Shao Y."/>
            <person name="Miller L."/>
            <person name="Grotbeck E.J."/>
            <person name="Davis N.W."/>
            <person name="Lim A."/>
            <person name="Dimalanta E.T."/>
            <person name="Potamousis K."/>
            <person name="Apodaca J."/>
            <person name="Anantharaman T.S."/>
            <person name="Lin J."/>
            <person name="Yen G."/>
            <person name="Schwartz D.C."/>
            <person name="Welch R.A."/>
            <person name="Blattner F.R."/>
        </authorList>
    </citation>
    <scope>NUCLEOTIDE SEQUENCE [LARGE SCALE GENOMIC DNA]</scope>
    <source>
        <strain>O157:H7 / EDL933 / ATCC 700927 / EHEC</strain>
    </source>
</reference>
<reference key="2">
    <citation type="journal article" date="2001" name="DNA Res.">
        <title>Complete genome sequence of enterohemorrhagic Escherichia coli O157:H7 and genomic comparison with a laboratory strain K-12.</title>
        <authorList>
            <person name="Hayashi T."/>
            <person name="Makino K."/>
            <person name="Ohnishi M."/>
            <person name="Kurokawa K."/>
            <person name="Ishii K."/>
            <person name="Yokoyama K."/>
            <person name="Han C.-G."/>
            <person name="Ohtsubo E."/>
            <person name="Nakayama K."/>
            <person name="Murata T."/>
            <person name="Tanaka M."/>
            <person name="Tobe T."/>
            <person name="Iida T."/>
            <person name="Takami H."/>
            <person name="Honda T."/>
            <person name="Sasakawa C."/>
            <person name="Ogasawara N."/>
            <person name="Yasunaga T."/>
            <person name="Kuhara S."/>
            <person name="Shiba T."/>
            <person name="Hattori M."/>
            <person name="Shinagawa H."/>
        </authorList>
    </citation>
    <scope>NUCLEOTIDE SEQUENCE [LARGE SCALE GENOMIC DNA]</scope>
    <source>
        <strain>O157:H7 / Sakai / RIMD 0509952 / EHEC</strain>
    </source>
</reference>
<feature type="chain" id="PRO_0000199884" description="Hexose-6-phosphate:phosphate antiporter">
    <location>
        <begin position="1"/>
        <end position="463"/>
    </location>
</feature>
<feature type="topological domain" description="Cytoplasmic" evidence="3">
    <location>
        <begin position="1"/>
        <end position="24"/>
    </location>
</feature>
<feature type="transmembrane region" description="Helical" evidence="2">
    <location>
        <begin position="25"/>
        <end position="45"/>
    </location>
</feature>
<feature type="topological domain" description="Periplasmic" evidence="3">
    <location>
        <begin position="46"/>
        <end position="60"/>
    </location>
</feature>
<feature type="transmembrane region" description="Helical" evidence="2">
    <location>
        <begin position="61"/>
        <end position="81"/>
    </location>
</feature>
<feature type="topological domain" description="Cytoplasmic" evidence="3">
    <location>
        <begin position="82"/>
        <end position="96"/>
    </location>
</feature>
<feature type="transmembrane region" description="Helical" evidence="2">
    <location>
        <begin position="97"/>
        <end position="117"/>
    </location>
</feature>
<feature type="topological domain" description="Periplasmic" evidence="3">
    <location>
        <begin position="118"/>
        <end position="120"/>
    </location>
</feature>
<feature type="transmembrane region" description="Helical" evidence="2">
    <location>
        <begin position="121"/>
        <end position="141"/>
    </location>
</feature>
<feature type="topological domain" description="Cytoplasmic" evidence="3">
    <location>
        <begin position="142"/>
        <end position="159"/>
    </location>
</feature>
<feature type="transmembrane region" description="Helical" evidence="2">
    <location>
        <begin position="160"/>
        <end position="180"/>
    </location>
</feature>
<feature type="topological domain" description="Periplasmic" evidence="3">
    <location>
        <begin position="181"/>
        <end position="189"/>
    </location>
</feature>
<feature type="transmembrane region" description="Helical" evidence="2">
    <location>
        <begin position="190"/>
        <end position="210"/>
    </location>
</feature>
<feature type="topological domain" description="Cytoplasmic" evidence="3">
    <location>
        <begin position="211"/>
        <end position="259"/>
    </location>
</feature>
<feature type="transmembrane region" description="Helical" evidence="2">
    <location>
        <begin position="260"/>
        <end position="280"/>
    </location>
</feature>
<feature type="topological domain" description="Periplasmic" evidence="3">
    <location>
        <begin position="281"/>
        <end position="297"/>
    </location>
</feature>
<feature type="transmembrane region" description="Helical" evidence="2">
    <location>
        <begin position="298"/>
        <end position="318"/>
    </location>
</feature>
<feature type="topological domain" description="Cytoplasmic" evidence="3">
    <location>
        <begin position="319"/>
        <end position="326"/>
    </location>
</feature>
<feature type="transmembrane region" description="Helical" evidence="2">
    <location>
        <begin position="327"/>
        <end position="347"/>
    </location>
</feature>
<feature type="topological domain" description="Periplasmic" evidence="3">
    <location>
        <begin position="348"/>
        <end position="357"/>
    </location>
</feature>
<feature type="transmembrane region" description="Helical" evidence="2">
    <location>
        <begin position="358"/>
        <end position="378"/>
    </location>
</feature>
<feature type="topological domain" description="Cytoplasmic" evidence="3">
    <location>
        <begin position="379"/>
        <end position="382"/>
    </location>
</feature>
<feature type="transmembrane region" description="Helical" evidence="2">
    <location>
        <begin position="383"/>
        <end position="403"/>
    </location>
</feature>
<feature type="topological domain" description="Periplasmic" evidence="3">
    <location>
        <begin position="404"/>
        <end position="425"/>
    </location>
</feature>
<feature type="transmembrane region" description="Helical" evidence="2">
    <location>
        <begin position="426"/>
        <end position="446"/>
    </location>
</feature>
<feature type="topological domain" description="Cytoplasmic" evidence="3">
    <location>
        <begin position="447"/>
        <end position="463"/>
    </location>
</feature>
<sequence>MLAFLNQVRKPTLDLPLEVRRKMWFKPFMQSYLVVFIGYLTMYLIRKNFNIAQNDMISTYGLSMTQLGMIGLGFSITYGVGKTLVSYYADGKNTKQFLPFMLILSAICMLGFSASMGSGSVSLFLMIAFYALSGFFQSTGGSCSYSTITKWTPRRKRGTFLGFWNISHNLGGAGAAGVALFGANYLFDGHVIGMFIFPSIIALIVGFIGLRYGSDSPESYGLGKAEELFGEEISEEDKETESTDMTKWQIFVEYVLKNKVIWLLCFANIFLYVVRIGIDQWSTVYAFQELKLSKAVAIQGFTLFEAGALVGTLLWGWLSDLANGRRGLVACIALALIIATLGVYQHASNEYIYLASLFALGFLVFGPQLLIGVAAVGFVPKKAIGAADGIKGTFAYLIGDSFAKLGLGMIADGTPVFGLTGWAGTFAALDIAAIGCICLMAIVAVMEERKIRREKKIQQLTVA</sequence>
<gene>
    <name type="primary">uhpT</name>
    <name type="ordered locus">Z5156</name>
    <name type="ordered locus">ECs4603</name>
</gene>
<keyword id="KW-0997">Cell inner membrane</keyword>
<keyword id="KW-1003">Cell membrane</keyword>
<keyword id="KW-0472">Membrane</keyword>
<keyword id="KW-0592">Phosphate transport</keyword>
<keyword id="KW-1185">Reference proteome</keyword>
<keyword id="KW-0762">Sugar transport</keyword>
<keyword id="KW-0812">Transmembrane</keyword>
<keyword id="KW-1133">Transmembrane helix</keyword>
<keyword id="KW-0813">Transport</keyword>
<name>UHPT_ECO57</name>